<gene>
    <name evidence="5" type="primary">LTPG24</name>
    <name evidence="7" type="ordered locus">At4g12360</name>
    <name evidence="8" type="ORF">T4C9.200</name>
</gene>
<comment type="function">
    <text evidence="2">Probable lipid transfer protein.</text>
</comment>
<comment type="subcellular location">
    <subcellularLocation>
        <location evidence="3">Cell membrane</location>
        <topology evidence="3">Lipid-anchor</topology>
        <topology evidence="3">GPI-anchor</topology>
    </subcellularLocation>
</comment>
<comment type="similarity">
    <text evidence="6">Belongs to the plant LTP family.</text>
</comment>
<evidence type="ECO:0000250" key="1">
    <source>
        <dbReference type="UniProtKB" id="A0A0B4JDK1"/>
    </source>
</evidence>
<evidence type="ECO:0000250" key="2">
    <source>
        <dbReference type="UniProtKB" id="Q9C7F7"/>
    </source>
</evidence>
<evidence type="ECO:0000255" key="3"/>
<evidence type="ECO:0000255" key="4">
    <source>
        <dbReference type="PROSITE-ProRule" id="PRU00498"/>
    </source>
</evidence>
<evidence type="ECO:0000303" key="5">
    <source>
    </source>
</evidence>
<evidence type="ECO:0000305" key="6"/>
<evidence type="ECO:0000312" key="7">
    <source>
        <dbReference type="Araport" id="AT4G12360"/>
    </source>
</evidence>
<evidence type="ECO:0000312" key="8">
    <source>
        <dbReference type="EMBL" id="CAB45983.1"/>
    </source>
</evidence>
<reference key="1">
    <citation type="journal article" date="1999" name="Nature">
        <title>Sequence and analysis of chromosome 4 of the plant Arabidopsis thaliana.</title>
        <authorList>
            <person name="Mayer K.F.X."/>
            <person name="Schueller C."/>
            <person name="Wambutt R."/>
            <person name="Murphy G."/>
            <person name="Volckaert G."/>
            <person name="Pohl T."/>
            <person name="Duesterhoeft A."/>
            <person name="Stiekema W."/>
            <person name="Entian K.-D."/>
            <person name="Terryn N."/>
            <person name="Harris B."/>
            <person name="Ansorge W."/>
            <person name="Brandt P."/>
            <person name="Grivell L.A."/>
            <person name="Rieger M."/>
            <person name="Weichselgartner M."/>
            <person name="de Simone V."/>
            <person name="Obermaier B."/>
            <person name="Mache R."/>
            <person name="Mueller M."/>
            <person name="Kreis M."/>
            <person name="Delseny M."/>
            <person name="Puigdomenech P."/>
            <person name="Watson M."/>
            <person name="Schmidtheini T."/>
            <person name="Reichert B."/>
            <person name="Portetelle D."/>
            <person name="Perez-Alonso M."/>
            <person name="Boutry M."/>
            <person name="Bancroft I."/>
            <person name="Vos P."/>
            <person name="Hoheisel J."/>
            <person name="Zimmermann W."/>
            <person name="Wedler H."/>
            <person name="Ridley P."/>
            <person name="Langham S.-A."/>
            <person name="McCullagh B."/>
            <person name="Bilham L."/>
            <person name="Robben J."/>
            <person name="van der Schueren J."/>
            <person name="Grymonprez B."/>
            <person name="Chuang Y.-J."/>
            <person name="Vandenbussche F."/>
            <person name="Braeken M."/>
            <person name="Weltjens I."/>
            <person name="Voet M."/>
            <person name="Bastiaens I."/>
            <person name="Aert R."/>
            <person name="Defoor E."/>
            <person name="Weitzenegger T."/>
            <person name="Bothe G."/>
            <person name="Ramsperger U."/>
            <person name="Hilbert H."/>
            <person name="Braun M."/>
            <person name="Holzer E."/>
            <person name="Brandt A."/>
            <person name="Peters S."/>
            <person name="van Staveren M."/>
            <person name="Dirkse W."/>
            <person name="Mooijman P."/>
            <person name="Klein Lankhorst R."/>
            <person name="Rose M."/>
            <person name="Hauf J."/>
            <person name="Koetter P."/>
            <person name="Berneiser S."/>
            <person name="Hempel S."/>
            <person name="Feldpausch M."/>
            <person name="Lamberth S."/>
            <person name="Van den Daele H."/>
            <person name="De Keyser A."/>
            <person name="Buysshaert C."/>
            <person name="Gielen J."/>
            <person name="Villarroel R."/>
            <person name="De Clercq R."/>
            <person name="van Montagu M."/>
            <person name="Rogers J."/>
            <person name="Cronin A."/>
            <person name="Quail M.A."/>
            <person name="Bray-Allen S."/>
            <person name="Clark L."/>
            <person name="Doggett J."/>
            <person name="Hall S."/>
            <person name="Kay M."/>
            <person name="Lennard N."/>
            <person name="McLay K."/>
            <person name="Mayes R."/>
            <person name="Pettett A."/>
            <person name="Rajandream M.A."/>
            <person name="Lyne M."/>
            <person name="Benes V."/>
            <person name="Rechmann S."/>
            <person name="Borkova D."/>
            <person name="Bloecker H."/>
            <person name="Scharfe M."/>
            <person name="Grimm M."/>
            <person name="Loehnert T.-H."/>
            <person name="Dose S."/>
            <person name="de Haan M."/>
            <person name="Maarse A.C."/>
            <person name="Schaefer M."/>
            <person name="Mueller-Auer S."/>
            <person name="Gabel C."/>
            <person name="Fuchs M."/>
            <person name="Fartmann B."/>
            <person name="Granderath K."/>
            <person name="Dauner D."/>
            <person name="Herzl A."/>
            <person name="Neumann S."/>
            <person name="Argiriou A."/>
            <person name="Vitale D."/>
            <person name="Liguori R."/>
            <person name="Piravandi E."/>
            <person name="Massenet O."/>
            <person name="Quigley F."/>
            <person name="Clabauld G."/>
            <person name="Muendlein A."/>
            <person name="Felber R."/>
            <person name="Schnabl S."/>
            <person name="Hiller R."/>
            <person name="Schmidt W."/>
            <person name="Lecharny A."/>
            <person name="Aubourg S."/>
            <person name="Chefdor F."/>
            <person name="Cooke R."/>
            <person name="Berger C."/>
            <person name="Monfort A."/>
            <person name="Casacuberta E."/>
            <person name="Gibbons T."/>
            <person name="Weber N."/>
            <person name="Vandenbol M."/>
            <person name="Bargues M."/>
            <person name="Terol J."/>
            <person name="Torres A."/>
            <person name="Perez-Perez A."/>
            <person name="Purnelle B."/>
            <person name="Bent E."/>
            <person name="Johnson S."/>
            <person name="Tacon D."/>
            <person name="Jesse T."/>
            <person name="Heijnen L."/>
            <person name="Schwarz S."/>
            <person name="Scholler P."/>
            <person name="Heber S."/>
            <person name="Francs P."/>
            <person name="Bielke C."/>
            <person name="Frishman D."/>
            <person name="Haase D."/>
            <person name="Lemcke K."/>
            <person name="Mewes H.-W."/>
            <person name="Stocker S."/>
            <person name="Zaccaria P."/>
            <person name="Bevan M."/>
            <person name="Wilson R.K."/>
            <person name="de la Bastide M."/>
            <person name="Habermann K."/>
            <person name="Parnell L."/>
            <person name="Dedhia N."/>
            <person name="Gnoj L."/>
            <person name="Schutz K."/>
            <person name="Huang E."/>
            <person name="Spiegel L."/>
            <person name="Sekhon M."/>
            <person name="Murray J."/>
            <person name="Sheet P."/>
            <person name="Cordes M."/>
            <person name="Abu-Threideh J."/>
            <person name="Stoneking T."/>
            <person name="Kalicki J."/>
            <person name="Graves T."/>
            <person name="Harmon G."/>
            <person name="Edwards J."/>
            <person name="Latreille P."/>
            <person name="Courtney L."/>
            <person name="Cloud J."/>
            <person name="Abbott A."/>
            <person name="Scott K."/>
            <person name="Johnson D."/>
            <person name="Minx P."/>
            <person name="Bentley D."/>
            <person name="Fulton B."/>
            <person name="Miller N."/>
            <person name="Greco T."/>
            <person name="Kemp K."/>
            <person name="Kramer J."/>
            <person name="Fulton L."/>
            <person name="Mardis E."/>
            <person name="Dante M."/>
            <person name="Pepin K."/>
            <person name="Hillier L.W."/>
            <person name="Nelson J."/>
            <person name="Spieth J."/>
            <person name="Ryan E."/>
            <person name="Andrews S."/>
            <person name="Geisel C."/>
            <person name="Layman D."/>
            <person name="Du H."/>
            <person name="Ali J."/>
            <person name="Berghoff A."/>
            <person name="Jones K."/>
            <person name="Drone K."/>
            <person name="Cotton M."/>
            <person name="Joshu C."/>
            <person name="Antonoiu B."/>
            <person name="Zidanic M."/>
            <person name="Strong C."/>
            <person name="Sun H."/>
            <person name="Lamar B."/>
            <person name="Yordan C."/>
            <person name="Ma P."/>
            <person name="Zhong J."/>
            <person name="Preston R."/>
            <person name="Vil D."/>
            <person name="Shekher M."/>
            <person name="Matero A."/>
            <person name="Shah R."/>
            <person name="Swaby I.K."/>
            <person name="O'Shaughnessy A."/>
            <person name="Rodriguez M."/>
            <person name="Hoffman J."/>
            <person name="Till S."/>
            <person name="Granat S."/>
            <person name="Shohdy N."/>
            <person name="Hasegawa A."/>
            <person name="Hameed A."/>
            <person name="Lodhi M."/>
            <person name="Johnson A."/>
            <person name="Chen E."/>
            <person name="Marra M.A."/>
            <person name="Martienssen R."/>
            <person name="McCombie W.R."/>
        </authorList>
    </citation>
    <scope>NUCLEOTIDE SEQUENCE [LARGE SCALE GENOMIC DNA]</scope>
    <source>
        <strain>cv. Columbia</strain>
    </source>
</reference>
<reference key="2">
    <citation type="journal article" date="2017" name="Plant J.">
        <title>Araport11: a complete reannotation of the Arabidopsis thaliana reference genome.</title>
        <authorList>
            <person name="Cheng C.Y."/>
            <person name="Krishnakumar V."/>
            <person name="Chan A.P."/>
            <person name="Thibaud-Nissen F."/>
            <person name="Schobel S."/>
            <person name="Town C.D."/>
        </authorList>
    </citation>
    <scope>GENOME REANNOTATION</scope>
    <source>
        <strain>cv. Columbia</strain>
    </source>
</reference>
<reference key="3">
    <citation type="submission" date="2004-01" db="EMBL/GenBank/DDBJ databases">
        <title>Arabidopsis ORF clones.</title>
        <authorList>
            <person name="Cheuk R.F."/>
            <person name="Chen H."/>
            <person name="Kim C.J."/>
            <person name="Shinn P."/>
            <person name="Ecker J.R."/>
        </authorList>
    </citation>
    <scope>NUCLEOTIDE SEQUENCE [LARGE SCALE MRNA]</scope>
    <source>
        <strain>cv. Columbia</strain>
    </source>
</reference>
<reference key="4">
    <citation type="journal article" date="2013" name="Plant Mol. Biol.">
        <title>Coexpression patterns indicate that GPI-anchored non-specific lipid transfer proteins are involved in accumulation of cuticular wax, suberin and sporopollenin.</title>
        <authorList>
            <person name="Edstam M.M."/>
            <person name="Blomqvist K."/>
            <person name="Ekloef A."/>
            <person name="Wennergren U."/>
            <person name="Edqvist J."/>
        </authorList>
    </citation>
    <scope>GENE FAMILY</scope>
    <scope>NOMENCLATURE</scope>
    <source>
        <strain>cv. Columbia</strain>
    </source>
</reference>
<feature type="signal peptide" evidence="3">
    <location>
        <begin position="1"/>
        <end position="23"/>
    </location>
</feature>
<feature type="chain" id="PRO_5014313274" description="Non-specific lipid transfer protein GPI-anchored 24">
    <location>
        <begin position="24"/>
        <end position="138"/>
    </location>
</feature>
<feature type="propeptide" id="PRO_0000451655" description="Removed in mature form" evidence="3">
    <location>
        <begin position="139"/>
        <end position="161"/>
    </location>
</feature>
<feature type="lipid moiety-binding region" description="GPI-anchor amidated aspartate" evidence="3">
    <location>
        <position position="138"/>
    </location>
</feature>
<feature type="glycosylation site" description="N-linked (GlcNAc...) asparagine" evidence="4">
    <location>
        <position position="92"/>
    </location>
</feature>
<feature type="disulfide bond" evidence="1">
    <location>
        <begin position="42"/>
        <end position="79"/>
    </location>
</feature>
<feature type="disulfide bond" evidence="1">
    <location>
        <begin position="49"/>
        <end position="63"/>
    </location>
</feature>
<feature type="disulfide bond" evidence="1">
    <location>
        <begin position="64"/>
        <end position="104"/>
    </location>
</feature>
<feature type="disulfide bond" evidence="1">
    <location>
        <begin position="77"/>
        <end position="113"/>
    </location>
</feature>
<proteinExistence type="evidence at transcript level"/>
<protein>
    <recommendedName>
        <fullName evidence="5">Non-specific lipid transfer protein GPI-anchored 24</fullName>
        <shortName evidence="5">AtLTPG-24</shortName>
        <shortName evidence="5">Protein LTP-GPI-ANCHORED 24</shortName>
    </recommendedName>
</protein>
<dbReference type="EMBL" id="AL080318">
    <property type="protein sequence ID" value="CAB45983.1"/>
    <property type="molecule type" value="Genomic_DNA"/>
</dbReference>
<dbReference type="EMBL" id="AL161533">
    <property type="protein sequence ID" value="CAB78279.1"/>
    <property type="molecule type" value="Genomic_DNA"/>
</dbReference>
<dbReference type="EMBL" id="CP002687">
    <property type="protein sequence ID" value="AEE83119.1"/>
    <property type="molecule type" value="Genomic_DNA"/>
</dbReference>
<dbReference type="EMBL" id="BT010827">
    <property type="protein sequence ID" value="AAR24194.1"/>
    <property type="molecule type" value="mRNA"/>
</dbReference>
<dbReference type="EMBL" id="BT011305">
    <property type="protein sequence ID" value="AAR92341.1"/>
    <property type="molecule type" value="mRNA"/>
</dbReference>
<dbReference type="PIR" id="T48146">
    <property type="entry name" value="T48146"/>
</dbReference>
<dbReference type="RefSeq" id="NP_192973.1">
    <property type="nucleotide sequence ID" value="NM_117306.3"/>
</dbReference>
<dbReference type="GlyCosmos" id="Q9STH5">
    <property type="glycosylation" value="1 site, No reported glycans"/>
</dbReference>
<dbReference type="GlyGen" id="Q9STH5">
    <property type="glycosylation" value="1 site"/>
</dbReference>
<dbReference type="PaxDb" id="3702-AT4G12360.1"/>
<dbReference type="EnsemblPlants" id="AT4G12360.1">
    <property type="protein sequence ID" value="AT4G12360.1"/>
    <property type="gene ID" value="AT4G12360"/>
</dbReference>
<dbReference type="GeneID" id="826845"/>
<dbReference type="Gramene" id="AT4G12360.1">
    <property type="protein sequence ID" value="AT4G12360.1"/>
    <property type="gene ID" value="AT4G12360"/>
</dbReference>
<dbReference type="KEGG" id="ath:AT4G12360"/>
<dbReference type="Araport" id="AT4G12360"/>
<dbReference type="TAIR" id="AT4G12360">
    <property type="gene designation" value="LTPG24"/>
</dbReference>
<dbReference type="HOGENOM" id="CLU_141860_0_0_1"/>
<dbReference type="InParanoid" id="Q9STH5"/>
<dbReference type="OMA" id="CLCDILT"/>
<dbReference type="PhylomeDB" id="Q9STH5"/>
<dbReference type="PRO" id="PR:Q9STH5"/>
<dbReference type="Proteomes" id="UP000006548">
    <property type="component" value="Chromosome 4"/>
</dbReference>
<dbReference type="ExpressionAtlas" id="Q9STH5">
    <property type="expression patterns" value="differential"/>
</dbReference>
<dbReference type="GO" id="GO:0005886">
    <property type="term" value="C:plasma membrane"/>
    <property type="evidence" value="ECO:0007669"/>
    <property type="project" value="UniProtKB-SubCell"/>
</dbReference>
<dbReference type="GO" id="GO:0098552">
    <property type="term" value="C:side of membrane"/>
    <property type="evidence" value="ECO:0007669"/>
    <property type="project" value="UniProtKB-KW"/>
</dbReference>
<dbReference type="Gene3D" id="1.10.110.10">
    <property type="entry name" value="Plant lipid-transfer and hydrophobic proteins"/>
    <property type="match status" value="1"/>
</dbReference>
<dbReference type="InterPro" id="IPR036312">
    <property type="entry name" value="Bifun_inhib/LTP/seed_sf"/>
</dbReference>
<dbReference type="InterPro" id="IPR016140">
    <property type="entry name" value="Bifunc_inhib/LTP/seed_store"/>
</dbReference>
<dbReference type="InterPro" id="IPR043325">
    <property type="entry name" value="LTSS"/>
</dbReference>
<dbReference type="PANTHER" id="PTHR33044">
    <property type="entry name" value="BIFUNCTIONAL INHIBITOR/LIPID-TRANSFER PROTEIN/SEED STORAGE 2S ALBUMIN SUPERFAMILY PROTEIN-RELATED"/>
    <property type="match status" value="1"/>
</dbReference>
<dbReference type="Pfam" id="PF14368">
    <property type="entry name" value="LTP_2"/>
    <property type="match status" value="1"/>
</dbReference>
<dbReference type="SUPFAM" id="SSF47699">
    <property type="entry name" value="Bifunctional inhibitor/lipid-transfer protein/seed storage 2S albumin"/>
    <property type="match status" value="1"/>
</dbReference>
<name>LTG24_ARATH</name>
<keyword id="KW-1003">Cell membrane</keyword>
<keyword id="KW-1015">Disulfide bond</keyword>
<keyword id="KW-0325">Glycoprotein</keyword>
<keyword id="KW-0336">GPI-anchor</keyword>
<keyword id="KW-0449">Lipoprotein</keyword>
<keyword id="KW-0472">Membrane</keyword>
<keyword id="KW-1185">Reference proteome</keyword>
<keyword id="KW-0732">Signal</keyword>
<sequence>MAQTTTLILLLATLLVAATTVSGQGPHIPLAPSPSVNEAMNCAAGLAVCLPAITQRGPPSQECCTAVETALTTQLSCLCGFIKSPMLLIPFNVTDFNALFSKTCGLTTDPNLCSETAAQAPLPKTAAPVPGAPKSDKDAASKLAGTGLVGIVVITIAAMFY</sequence>
<accession>Q9STH5</accession>
<organism>
    <name type="scientific">Arabidopsis thaliana</name>
    <name type="common">Mouse-ear cress</name>
    <dbReference type="NCBI Taxonomy" id="3702"/>
    <lineage>
        <taxon>Eukaryota</taxon>
        <taxon>Viridiplantae</taxon>
        <taxon>Streptophyta</taxon>
        <taxon>Embryophyta</taxon>
        <taxon>Tracheophyta</taxon>
        <taxon>Spermatophyta</taxon>
        <taxon>Magnoliopsida</taxon>
        <taxon>eudicotyledons</taxon>
        <taxon>Gunneridae</taxon>
        <taxon>Pentapetalae</taxon>
        <taxon>rosids</taxon>
        <taxon>malvids</taxon>
        <taxon>Brassicales</taxon>
        <taxon>Brassicaceae</taxon>
        <taxon>Camelineae</taxon>
        <taxon>Arabidopsis</taxon>
    </lineage>
</organism>